<gene>
    <name evidence="1" type="primary">recR</name>
    <name type="ordered locus">CTLon_0488</name>
</gene>
<feature type="chain" id="PRO_1000089719" description="Recombination protein RecR">
    <location>
        <begin position="1"/>
        <end position="200"/>
    </location>
</feature>
<feature type="domain" description="Toprim" evidence="1">
    <location>
        <begin position="82"/>
        <end position="177"/>
    </location>
</feature>
<feature type="zinc finger region" description="C4-type" evidence="1">
    <location>
        <begin position="58"/>
        <end position="75"/>
    </location>
</feature>
<organism>
    <name type="scientific">Chlamydia trachomatis serovar L2b (strain UCH-1/proctitis)</name>
    <dbReference type="NCBI Taxonomy" id="471473"/>
    <lineage>
        <taxon>Bacteria</taxon>
        <taxon>Pseudomonadati</taxon>
        <taxon>Chlamydiota</taxon>
        <taxon>Chlamydiia</taxon>
        <taxon>Chlamydiales</taxon>
        <taxon>Chlamydiaceae</taxon>
        <taxon>Chlamydia/Chlamydophila group</taxon>
        <taxon>Chlamydia</taxon>
    </lineage>
</organism>
<accession>B0BBM1</accession>
<dbReference type="EMBL" id="AM884177">
    <property type="protein sequence ID" value="CAP06886.1"/>
    <property type="molecule type" value="Genomic_DNA"/>
</dbReference>
<dbReference type="RefSeq" id="WP_009872491.1">
    <property type="nucleotide sequence ID" value="NC_010280.2"/>
</dbReference>
<dbReference type="SMR" id="B0BBM1"/>
<dbReference type="KEGG" id="ctl:CTLon_0488"/>
<dbReference type="HOGENOM" id="CLU_060739_1_1_0"/>
<dbReference type="Proteomes" id="UP001154401">
    <property type="component" value="Chromosome"/>
</dbReference>
<dbReference type="GO" id="GO:0003677">
    <property type="term" value="F:DNA binding"/>
    <property type="evidence" value="ECO:0007669"/>
    <property type="project" value="UniProtKB-UniRule"/>
</dbReference>
<dbReference type="GO" id="GO:0008270">
    <property type="term" value="F:zinc ion binding"/>
    <property type="evidence" value="ECO:0007669"/>
    <property type="project" value="UniProtKB-KW"/>
</dbReference>
<dbReference type="GO" id="GO:0006310">
    <property type="term" value="P:DNA recombination"/>
    <property type="evidence" value="ECO:0007669"/>
    <property type="project" value="UniProtKB-UniRule"/>
</dbReference>
<dbReference type="GO" id="GO:0006281">
    <property type="term" value="P:DNA repair"/>
    <property type="evidence" value="ECO:0007669"/>
    <property type="project" value="UniProtKB-UniRule"/>
</dbReference>
<dbReference type="CDD" id="cd01025">
    <property type="entry name" value="TOPRIM_recR"/>
    <property type="match status" value="1"/>
</dbReference>
<dbReference type="Gene3D" id="3.40.1360.10">
    <property type="match status" value="1"/>
</dbReference>
<dbReference type="Gene3D" id="1.10.8.420">
    <property type="entry name" value="RecR Domain 1"/>
    <property type="match status" value="1"/>
</dbReference>
<dbReference type="HAMAP" id="MF_00017">
    <property type="entry name" value="RecR"/>
    <property type="match status" value="1"/>
</dbReference>
<dbReference type="InterPro" id="IPR000093">
    <property type="entry name" value="DNA_Rcmb_RecR"/>
</dbReference>
<dbReference type="InterPro" id="IPR023627">
    <property type="entry name" value="Rcmb_RecR"/>
</dbReference>
<dbReference type="InterPro" id="IPR015967">
    <property type="entry name" value="Rcmb_RecR_Znf"/>
</dbReference>
<dbReference type="InterPro" id="IPR006171">
    <property type="entry name" value="TOPRIM_dom"/>
</dbReference>
<dbReference type="InterPro" id="IPR034137">
    <property type="entry name" value="TOPRIM_RecR"/>
</dbReference>
<dbReference type="NCBIfam" id="TIGR00615">
    <property type="entry name" value="recR"/>
    <property type="match status" value="1"/>
</dbReference>
<dbReference type="PANTHER" id="PTHR30446">
    <property type="entry name" value="RECOMBINATION PROTEIN RECR"/>
    <property type="match status" value="1"/>
</dbReference>
<dbReference type="PANTHER" id="PTHR30446:SF0">
    <property type="entry name" value="RECOMBINATION PROTEIN RECR"/>
    <property type="match status" value="1"/>
</dbReference>
<dbReference type="Pfam" id="PF21175">
    <property type="entry name" value="RecR_C"/>
    <property type="match status" value="1"/>
</dbReference>
<dbReference type="Pfam" id="PF21176">
    <property type="entry name" value="RecR_HhH"/>
    <property type="match status" value="1"/>
</dbReference>
<dbReference type="Pfam" id="PF13662">
    <property type="entry name" value="Toprim_4"/>
    <property type="match status" value="1"/>
</dbReference>
<dbReference type="SMART" id="SM00493">
    <property type="entry name" value="TOPRIM"/>
    <property type="match status" value="1"/>
</dbReference>
<dbReference type="SUPFAM" id="SSF111304">
    <property type="entry name" value="Recombination protein RecR"/>
    <property type="match status" value="1"/>
</dbReference>
<dbReference type="PROSITE" id="PS01300">
    <property type="entry name" value="RECR"/>
    <property type="match status" value="1"/>
</dbReference>
<dbReference type="PROSITE" id="PS50880">
    <property type="entry name" value="TOPRIM"/>
    <property type="match status" value="1"/>
</dbReference>
<protein>
    <recommendedName>
        <fullName evidence="1">Recombination protein RecR</fullName>
    </recommendedName>
</protein>
<name>RECR_CHLTB</name>
<sequence length="200" mass="22107">MLKYPDYISKLISFLKKLPGIGFKSAEKIAFELLEWDPSQIEAMALALQEFSTSHATCSNCFCLKISQTSPCNFCSESRDSSSLCIVATPKDVFALEKSKIFKGHYFVLGNLLSPITGKHLSLEKLAILKQRIEACSPKEMIIALDATLEGDATALFLKQEFSYLPIKISRLALGMPVGLSFDFVDANTLARAFSGRNCF</sequence>
<comment type="function">
    <text evidence="1">May play a role in DNA repair. It seems to be involved in an RecBC-independent recombinational process of DNA repair. It may act with RecF and RecO.</text>
</comment>
<comment type="similarity">
    <text evidence="1">Belongs to the RecR family.</text>
</comment>
<evidence type="ECO:0000255" key="1">
    <source>
        <dbReference type="HAMAP-Rule" id="MF_00017"/>
    </source>
</evidence>
<keyword id="KW-0227">DNA damage</keyword>
<keyword id="KW-0233">DNA recombination</keyword>
<keyword id="KW-0234">DNA repair</keyword>
<keyword id="KW-0479">Metal-binding</keyword>
<keyword id="KW-0862">Zinc</keyword>
<keyword id="KW-0863">Zinc-finger</keyword>
<reference key="1">
    <citation type="journal article" date="2008" name="Genome Res.">
        <title>Chlamydia trachomatis: genome sequence analysis of lymphogranuloma venereum isolates.</title>
        <authorList>
            <person name="Thomson N.R."/>
            <person name="Holden M.T.G."/>
            <person name="Carder C."/>
            <person name="Lennard N."/>
            <person name="Lockey S.J."/>
            <person name="Marsh P."/>
            <person name="Skipp P."/>
            <person name="O'Connor C.D."/>
            <person name="Goodhead I."/>
            <person name="Norbertzcak H."/>
            <person name="Harris B."/>
            <person name="Ormond D."/>
            <person name="Rance R."/>
            <person name="Quail M.A."/>
            <person name="Parkhill J."/>
            <person name="Stephens R.S."/>
            <person name="Clarke I.N."/>
        </authorList>
    </citation>
    <scope>NUCLEOTIDE SEQUENCE [LARGE SCALE GENOMIC DNA]</scope>
    <source>
        <strain>UCH-1/proctitis</strain>
    </source>
</reference>
<proteinExistence type="inferred from homology"/>